<organism>
    <name type="scientific">Oryza sativa subsp. japonica</name>
    <name type="common">Rice</name>
    <dbReference type="NCBI Taxonomy" id="39947"/>
    <lineage>
        <taxon>Eukaryota</taxon>
        <taxon>Viridiplantae</taxon>
        <taxon>Streptophyta</taxon>
        <taxon>Embryophyta</taxon>
        <taxon>Tracheophyta</taxon>
        <taxon>Spermatophyta</taxon>
        <taxon>Magnoliopsida</taxon>
        <taxon>Liliopsida</taxon>
        <taxon>Poales</taxon>
        <taxon>Poaceae</taxon>
        <taxon>BOP clade</taxon>
        <taxon>Oryzoideae</taxon>
        <taxon>Oryzeae</taxon>
        <taxon>Oryzinae</taxon>
        <taxon>Oryza</taxon>
        <taxon>Oryza sativa</taxon>
    </lineage>
</organism>
<comment type="function">
    <text evidence="1">Involved in the synthesis of the major structural component of photosynthetic membranes.</text>
</comment>
<comment type="catalytic activity">
    <reaction>
        <text>a 1,2-diacyl-sn-glycerol + UDP-alpha-D-galactose = a 1,2-diacyl-3-O-(beta-D-galactosyl)-sn-glycerol + UDP + H(+)</text>
        <dbReference type="Rhea" id="RHEA:14945"/>
        <dbReference type="ChEBI" id="CHEBI:15378"/>
        <dbReference type="ChEBI" id="CHEBI:17615"/>
        <dbReference type="ChEBI" id="CHEBI:17815"/>
        <dbReference type="ChEBI" id="CHEBI:58223"/>
        <dbReference type="ChEBI" id="CHEBI:66914"/>
        <dbReference type="EC" id="2.4.1.46"/>
    </reaction>
</comment>
<comment type="subcellular location">
    <subcellularLocation>
        <location evidence="3">Plastid</location>
        <location evidence="3">Chloroplast membrane</location>
    </subcellularLocation>
</comment>
<comment type="similarity">
    <text evidence="3">Belongs to the glycosyltransferase 28 family.</text>
</comment>
<comment type="sequence caution" evidence="3">
    <conflict type="erroneous gene model prediction">
        <sequence resource="EMBL-CDS" id="AAQ56578"/>
    </conflict>
</comment>
<comment type="sequence caution" evidence="3">
    <conflict type="erroneous gene model prediction">
        <sequence resource="EMBL-CDS" id="BAD30710"/>
    </conflict>
</comment>
<comment type="sequence caution" evidence="3">
    <conflict type="erroneous gene model prediction">
        <sequence resource="EMBL-CDS" id="BAD31731"/>
    </conflict>
</comment>
<accession>Q6UTZ2</accession>
<accession>Q0J6L4</accession>
<accession>Q69LQ8</accession>
<protein>
    <recommendedName>
        <fullName>Probable monogalactosyldiacylglycerol synthase 2, chloroplastic</fullName>
        <shortName>OsMGD2</shortName>
        <ecNumber>2.4.1.46</ecNumber>
    </recommendedName>
</protein>
<sequence length="469" mass="52123">MVISVATPRRSIRDAVLGGVLGAGGRQLYQPLRCAFYDGAAGGGLTAALSEDGAEGGVPLPCGRKTAAAKNVLILMSDTGGGHRASAEALRDAFRLEFGDAYQVFVRDLGKEYGGWPLNDMERSYKFMIRHVRLWKVAFHGTSPRWVHGMYLAALAYFYANEVVAGIMRYNPDIIISVHPLMQHIPLWVLKWQSLHPKVPFVTVITDLNTCHPTWFHHGVTRCYCPSAEVAKRALLRGLEPSQIRVYGLPIRPSFCRAVLDKDELRKELDMDPDLPAVLLMGGGEGMGPVEETARALSDELYDRRRRRPVGQIVVICGRNQVLRSTLQSSRWNVPVKIRGFEKQMEKWMGACDCIITKAGPGTIAEALIRGLPIILNDFIPGQEVGNVPYVVDNGAGVFSKDPREAARQVARWFTTHTNELRRYSLNALKLAQPEAVFDIVKDIHKLQQQPATVTRIPYSLTSSFSYSI</sequence>
<name>MGDG2_ORYSJ</name>
<reference key="1">
    <citation type="journal article" date="2004" name="Plant Cell">
        <title>Composition and structure of the centromeric region of rice chromosome 8.</title>
        <authorList>
            <person name="Wu J."/>
            <person name="Yamagata H."/>
            <person name="Hayashi-Tsugane M."/>
            <person name="Hijishita S."/>
            <person name="Fujisawa M."/>
            <person name="Shibata M."/>
            <person name="Itoh Y."/>
            <person name="Nakamura M."/>
            <person name="Sakaguchi M."/>
            <person name="Yoshihara R."/>
            <person name="Kobayashi H."/>
            <person name="Itoh K."/>
            <person name="Karasawa W."/>
            <person name="Yamamoto M."/>
            <person name="Saji S."/>
            <person name="Katagiri S."/>
            <person name="Kanamori H."/>
            <person name="Namiki N."/>
            <person name="Katayose Y."/>
            <person name="Matsumoto T."/>
            <person name="Sasaki T."/>
        </authorList>
    </citation>
    <scope>NUCLEOTIDE SEQUENCE [GENOMIC DNA]</scope>
</reference>
<reference key="2">
    <citation type="journal article" date="2004" name="Nat. Genet.">
        <title>Sequencing of a rice centromere uncovers active genes.</title>
        <authorList>
            <person name="Nagaki K."/>
            <person name="Cheng Z."/>
            <person name="Ouyang S."/>
            <person name="Talbert P.B."/>
            <person name="Kim M."/>
            <person name="Jones K.M."/>
            <person name="Henikoff S."/>
            <person name="Buell C.R."/>
            <person name="Jiang J."/>
        </authorList>
    </citation>
    <scope>NUCLEOTIDE SEQUENCE [GENOMIC DNA]</scope>
</reference>
<reference key="3">
    <citation type="journal article" date="2005" name="PLoS Biol.">
        <title>The genomes of Oryza sativa: a history of duplications.</title>
        <authorList>
            <person name="Yu J."/>
            <person name="Wang J."/>
            <person name="Lin W."/>
            <person name="Li S."/>
            <person name="Li H."/>
            <person name="Zhou J."/>
            <person name="Ni P."/>
            <person name="Dong W."/>
            <person name="Hu S."/>
            <person name="Zeng C."/>
            <person name="Zhang J."/>
            <person name="Zhang Y."/>
            <person name="Li R."/>
            <person name="Xu Z."/>
            <person name="Li S."/>
            <person name="Li X."/>
            <person name="Zheng H."/>
            <person name="Cong L."/>
            <person name="Lin L."/>
            <person name="Yin J."/>
            <person name="Geng J."/>
            <person name="Li G."/>
            <person name="Shi J."/>
            <person name="Liu J."/>
            <person name="Lv H."/>
            <person name="Li J."/>
            <person name="Wang J."/>
            <person name="Deng Y."/>
            <person name="Ran L."/>
            <person name="Shi X."/>
            <person name="Wang X."/>
            <person name="Wu Q."/>
            <person name="Li C."/>
            <person name="Ren X."/>
            <person name="Wang J."/>
            <person name="Wang X."/>
            <person name="Li D."/>
            <person name="Liu D."/>
            <person name="Zhang X."/>
            <person name="Ji Z."/>
            <person name="Zhao W."/>
            <person name="Sun Y."/>
            <person name="Zhang Z."/>
            <person name="Bao J."/>
            <person name="Han Y."/>
            <person name="Dong L."/>
            <person name="Ji J."/>
            <person name="Chen P."/>
            <person name="Wu S."/>
            <person name="Liu J."/>
            <person name="Xiao Y."/>
            <person name="Bu D."/>
            <person name="Tan J."/>
            <person name="Yang L."/>
            <person name="Ye C."/>
            <person name="Zhang J."/>
            <person name="Xu J."/>
            <person name="Zhou Y."/>
            <person name="Yu Y."/>
            <person name="Zhang B."/>
            <person name="Zhuang S."/>
            <person name="Wei H."/>
            <person name="Liu B."/>
            <person name="Lei M."/>
            <person name="Yu H."/>
            <person name="Li Y."/>
            <person name="Xu H."/>
            <person name="Wei S."/>
            <person name="He X."/>
            <person name="Fang L."/>
            <person name="Zhang Z."/>
            <person name="Zhang Y."/>
            <person name="Huang X."/>
            <person name="Su Z."/>
            <person name="Tong W."/>
            <person name="Li J."/>
            <person name="Tong Z."/>
            <person name="Li S."/>
            <person name="Ye J."/>
            <person name="Wang L."/>
            <person name="Fang L."/>
            <person name="Lei T."/>
            <person name="Chen C.-S."/>
            <person name="Chen H.-C."/>
            <person name="Xu Z."/>
            <person name="Li H."/>
            <person name="Huang H."/>
            <person name="Zhang F."/>
            <person name="Xu H."/>
            <person name="Li N."/>
            <person name="Zhao C."/>
            <person name="Li S."/>
            <person name="Dong L."/>
            <person name="Huang Y."/>
            <person name="Li L."/>
            <person name="Xi Y."/>
            <person name="Qi Q."/>
            <person name="Li W."/>
            <person name="Zhang B."/>
            <person name="Hu W."/>
            <person name="Zhang Y."/>
            <person name="Tian X."/>
            <person name="Jiao Y."/>
            <person name="Liang X."/>
            <person name="Jin J."/>
            <person name="Gao L."/>
            <person name="Zheng W."/>
            <person name="Hao B."/>
            <person name="Liu S.-M."/>
            <person name="Wang W."/>
            <person name="Yuan L."/>
            <person name="Cao M."/>
            <person name="McDermott J."/>
            <person name="Samudrala R."/>
            <person name="Wang J."/>
            <person name="Wong G.K.-S."/>
            <person name="Yang H."/>
        </authorList>
    </citation>
    <scope>NUCLEOTIDE SEQUENCE [LARGE SCALE GENOMIC DNA]</scope>
    <source>
        <strain>cv. Nipponbare</strain>
    </source>
</reference>
<reference key="4">
    <citation type="journal article" date="2005" name="Nature">
        <title>The map-based sequence of the rice genome.</title>
        <authorList>
            <consortium name="International rice genome sequencing project (IRGSP)"/>
        </authorList>
    </citation>
    <scope>NUCLEOTIDE SEQUENCE [LARGE SCALE GENOMIC DNA] OF 62-469</scope>
    <source>
        <strain>cv. Nipponbare</strain>
    </source>
</reference>
<reference key="5">
    <citation type="journal article" date="2008" name="Nucleic Acids Res.">
        <title>The rice annotation project database (RAP-DB): 2008 update.</title>
        <authorList>
            <consortium name="The rice annotation project (RAP)"/>
        </authorList>
    </citation>
    <scope>GENOME REANNOTATION</scope>
    <source>
        <strain>cv. Nipponbare</strain>
    </source>
</reference>
<reference key="6">
    <citation type="journal article" date="2013" name="Rice">
        <title>Improvement of the Oryza sativa Nipponbare reference genome using next generation sequence and optical map data.</title>
        <authorList>
            <person name="Kawahara Y."/>
            <person name="de la Bastide M."/>
            <person name="Hamilton J.P."/>
            <person name="Kanamori H."/>
            <person name="McCombie W.R."/>
            <person name="Ouyang S."/>
            <person name="Schwartz D.C."/>
            <person name="Tanaka T."/>
            <person name="Wu J."/>
            <person name="Zhou S."/>
            <person name="Childs K.L."/>
            <person name="Davidson R.M."/>
            <person name="Lin H."/>
            <person name="Quesada-Ocampo L."/>
            <person name="Vaillancourt B."/>
            <person name="Sakai H."/>
            <person name="Lee S.S."/>
            <person name="Kim J."/>
            <person name="Numa H."/>
            <person name="Itoh T."/>
            <person name="Buell C.R."/>
            <person name="Matsumoto T."/>
        </authorList>
    </citation>
    <scope>GENOME REANNOTATION</scope>
    <source>
        <strain>cv. Nipponbare</strain>
    </source>
</reference>
<reference key="7">
    <citation type="journal article" date="2003" name="Science">
        <title>Collection, mapping, and annotation of over 28,000 cDNA clones from japonica rice.</title>
        <authorList>
            <consortium name="The rice full-length cDNA consortium"/>
        </authorList>
    </citation>
    <scope>NUCLEOTIDE SEQUENCE [LARGE SCALE MRNA] OF 62-469</scope>
    <source>
        <strain>cv. Nipponbare</strain>
    </source>
</reference>
<gene>
    <name type="primary">MGD2</name>
    <name type="ordered locus">Os08g0299400</name>
    <name type="ordered locus">LOC_Os08g20420</name>
    <name type="ORF">OsJ_025729</name>
    <name type="ORF">OSJNBa0063H21.123</name>
    <name type="ORF">OSJNBa0070J19.22</name>
    <name type="ORF">P0045D08.104</name>
</gene>
<evidence type="ECO:0000250" key="1"/>
<evidence type="ECO:0000255" key="2"/>
<evidence type="ECO:0000305" key="3"/>
<feature type="transit peptide" description="Chloroplast" evidence="2">
    <location>
        <begin position="1"/>
        <end position="42"/>
    </location>
</feature>
<feature type="chain" id="PRO_0000349429" description="Probable monogalactosyldiacylglycerol synthase 2, chloroplastic">
    <location>
        <begin position="43"/>
        <end position="469"/>
    </location>
</feature>
<keyword id="KW-0150">Chloroplast</keyword>
<keyword id="KW-0328">Glycosyltransferase</keyword>
<keyword id="KW-0472">Membrane</keyword>
<keyword id="KW-0934">Plastid</keyword>
<keyword id="KW-1185">Reference proteome</keyword>
<keyword id="KW-0808">Transferase</keyword>
<keyword id="KW-0809">Transit peptide</keyword>
<dbReference type="EC" id="2.4.1.46"/>
<dbReference type="EMBL" id="AP004458">
    <property type="protein sequence ID" value="BAD30710.1"/>
    <property type="status" value="ALT_SEQ"/>
    <property type="molecule type" value="Genomic_DNA"/>
</dbReference>
<dbReference type="EMBL" id="AP005819">
    <property type="protein sequence ID" value="BAD31731.1"/>
    <property type="status" value="ALT_SEQ"/>
    <property type="molecule type" value="Genomic_DNA"/>
</dbReference>
<dbReference type="EMBL" id="AY360394">
    <property type="protein sequence ID" value="AAQ56578.1"/>
    <property type="status" value="ALT_SEQ"/>
    <property type="molecule type" value="Genomic_DNA"/>
</dbReference>
<dbReference type="EMBL" id="CM000145">
    <property type="status" value="NOT_ANNOTATED_CDS"/>
    <property type="molecule type" value="Genomic_DNA"/>
</dbReference>
<dbReference type="EMBL" id="AP008214">
    <property type="protein sequence ID" value="BAF23401.1"/>
    <property type="molecule type" value="Genomic_DNA"/>
</dbReference>
<dbReference type="EMBL" id="AP014964">
    <property type="status" value="NOT_ANNOTATED_CDS"/>
    <property type="molecule type" value="Genomic_DNA"/>
</dbReference>
<dbReference type="EMBL" id="AK064148">
    <property type="status" value="NOT_ANNOTATED_CDS"/>
    <property type="molecule type" value="mRNA"/>
</dbReference>
<dbReference type="RefSeq" id="XP_015649135.1">
    <property type="nucleotide sequence ID" value="XM_015793649.1"/>
</dbReference>
<dbReference type="SMR" id="Q6UTZ2"/>
<dbReference type="STRING" id="39947.Q6UTZ2"/>
<dbReference type="CAZy" id="GT28">
    <property type="family name" value="Glycosyltransferase Family 28"/>
</dbReference>
<dbReference type="PaxDb" id="39947-Q6UTZ2"/>
<dbReference type="EnsemblPlants" id="Os08t0299400-01">
    <property type="protein sequence ID" value="Os08t0299400-01"/>
    <property type="gene ID" value="Os08g0299400"/>
</dbReference>
<dbReference type="Gramene" id="Os08t0299400-01">
    <property type="protein sequence ID" value="Os08t0299400-01"/>
    <property type="gene ID" value="Os08g0299400"/>
</dbReference>
<dbReference type="KEGG" id="dosa:Os08g0299400"/>
<dbReference type="eggNOG" id="ENOG502QPXV">
    <property type="taxonomic scope" value="Eukaryota"/>
</dbReference>
<dbReference type="HOGENOM" id="CLU_028367_3_1_1"/>
<dbReference type="InParanoid" id="Q6UTZ2"/>
<dbReference type="OrthoDB" id="200404at2759"/>
<dbReference type="Proteomes" id="UP000000763">
    <property type="component" value="Chromosome 8"/>
</dbReference>
<dbReference type="Proteomes" id="UP000007752">
    <property type="component" value="Chromosome 8"/>
</dbReference>
<dbReference type="Proteomes" id="UP000059680">
    <property type="component" value="Chromosome 8"/>
</dbReference>
<dbReference type="GO" id="GO:0031969">
    <property type="term" value="C:chloroplast membrane"/>
    <property type="evidence" value="ECO:0007669"/>
    <property type="project" value="UniProtKB-SubCell"/>
</dbReference>
<dbReference type="GO" id="GO:0046509">
    <property type="term" value="F:1,2-diacylglycerol 3-beta-galactosyltransferase activity"/>
    <property type="evidence" value="ECO:0007669"/>
    <property type="project" value="UniProtKB-EC"/>
</dbReference>
<dbReference type="GO" id="GO:0009247">
    <property type="term" value="P:glycolipid biosynthetic process"/>
    <property type="evidence" value="ECO:0007669"/>
    <property type="project" value="InterPro"/>
</dbReference>
<dbReference type="CDD" id="cd17507">
    <property type="entry name" value="GT28_Beta-DGS-like"/>
    <property type="match status" value="1"/>
</dbReference>
<dbReference type="Gene3D" id="3.40.50.2000">
    <property type="entry name" value="Glycogen Phosphorylase B"/>
    <property type="match status" value="1"/>
</dbReference>
<dbReference type="InterPro" id="IPR009695">
    <property type="entry name" value="Diacylglyc_glucosyltr_N"/>
</dbReference>
<dbReference type="InterPro" id="IPR007235">
    <property type="entry name" value="Glyco_trans_28_C"/>
</dbReference>
<dbReference type="InterPro" id="IPR050519">
    <property type="entry name" value="Glycosyltransf_28_UgtP"/>
</dbReference>
<dbReference type="PANTHER" id="PTHR43025">
    <property type="entry name" value="MONOGALACTOSYLDIACYLGLYCEROL SYNTHASE"/>
    <property type="match status" value="1"/>
</dbReference>
<dbReference type="PANTHER" id="PTHR43025:SF8">
    <property type="entry name" value="MONOGALACTOSYLDIACYLGLYCEROL SYNTHASE 2, CHLOROPLASTIC-RELATED"/>
    <property type="match status" value="1"/>
</dbReference>
<dbReference type="Pfam" id="PF04101">
    <property type="entry name" value="Glyco_tran_28_C"/>
    <property type="match status" value="1"/>
</dbReference>
<dbReference type="Pfam" id="PF06925">
    <property type="entry name" value="MGDG_synth"/>
    <property type="match status" value="1"/>
</dbReference>
<dbReference type="SUPFAM" id="SSF53756">
    <property type="entry name" value="UDP-Glycosyltransferase/glycogen phosphorylase"/>
    <property type="match status" value="1"/>
</dbReference>
<proteinExistence type="evidence at transcript level"/>